<gene>
    <name evidence="1" type="primary">thrS</name>
    <name type="ordered locus">SACOL1729</name>
</gene>
<comment type="function">
    <text evidence="1">Catalyzes the attachment of threonine to tRNA(Thr) in a two-step reaction: L-threonine is first activated by ATP to form Thr-AMP and then transferred to the acceptor end of tRNA(Thr). Also edits incorrectly charged L-seryl-tRNA(Thr).</text>
</comment>
<comment type="catalytic activity">
    <reaction evidence="1">
        <text>tRNA(Thr) + L-threonine + ATP = L-threonyl-tRNA(Thr) + AMP + diphosphate + H(+)</text>
        <dbReference type="Rhea" id="RHEA:24624"/>
        <dbReference type="Rhea" id="RHEA-COMP:9670"/>
        <dbReference type="Rhea" id="RHEA-COMP:9704"/>
        <dbReference type="ChEBI" id="CHEBI:15378"/>
        <dbReference type="ChEBI" id="CHEBI:30616"/>
        <dbReference type="ChEBI" id="CHEBI:33019"/>
        <dbReference type="ChEBI" id="CHEBI:57926"/>
        <dbReference type="ChEBI" id="CHEBI:78442"/>
        <dbReference type="ChEBI" id="CHEBI:78534"/>
        <dbReference type="ChEBI" id="CHEBI:456215"/>
        <dbReference type="EC" id="6.1.1.3"/>
    </reaction>
</comment>
<comment type="cofactor">
    <cofactor evidence="1">
        <name>Zn(2+)</name>
        <dbReference type="ChEBI" id="CHEBI:29105"/>
    </cofactor>
    <text evidence="1">Binds 1 zinc ion per subunit.</text>
</comment>
<comment type="subunit">
    <text evidence="1">Homodimer.</text>
</comment>
<comment type="subcellular location">
    <subcellularLocation>
        <location evidence="1">Cytoplasm</location>
    </subcellularLocation>
</comment>
<comment type="similarity">
    <text evidence="1">Belongs to the class-II aminoacyl-tRNA synthetase family.</text>
</comment>
<dbReference type="EC" id="6.1.1.3" evidence="1"/>
<dbReference type="EMBL" id="CP000046">
    <property type="protein sequence ID" value="AAW36834.1"/>
    <property type="molecule type" value="Genomic_DNA"/>
</dbReference>
<dbReference type="RefSeq" id="WP_000435132.1">
    <property type="nucleotide sequence ID" value="NZ_JBGOFO010000003.1"/>
</dbReference>
<dbReference type="SMR" id="Q5HF90"/>
<dbReference type="KEGG" id="sac:SACOL1729"/>
<dbReference type="HOGENOM" id="CLU_008554_0_1_9"/>
<dbReference type="Proteomes" id="UP000000530">
    <property type="component" value="Chromosome"/>
</dbReference>
<dbReference type="GO" id="GO:0005737">
    <property type="term" value="C:cytoplasm"/>
    <property type="evidence" value="ECO:0007669"/>
    <property type="project" value="UniProtKB-SubCell"/>
</dbReference>
<dbReference type="GO" id="GO:0005524">
    <property type="term" value="F:ATP binding"/>
    <property type="evidence" value="ECO:0007669"/>
    <property type="project" value="UniProtKB-UniRule"/>
</dbReference>
<dbReference type="GO" id="GO:0140096">
    <property type="term" value="F:catalytic activity, acting on a protein"/>
    <property type="evidence" value="ECO:0007669"/>
    <property type="project" value="UniProtKB-ARBA"/>
</dbReference>
<dbReference type="GO" id="GO:0046872">
    <property type="term" value="F:metal ion binding"/>
    <property type="evidence" value="ECO:0007669"/>
    <property type="project" value="UniProtKB-KW"/>
</dbReference>
<dbReference type="GO" id="GO:0004829">
    <property type="term" value="F:threonine-tRNA ligase activity"/>
    <property type="evidence" value="ECO:0007669"/>
    <property type="project" value="UniProtKB-UniRule"/>
</dbReference>
<dbReference type="GO" id="GO:0016740">
    <property type="term" value="F:transferase activity"/>
    <property type="evidence" value="ECO:0007669"/>
    <property type="project" value="UniProtKB-ARBA"/>
</dbReference>
<dbReference type="GO" id="GO:0000049">
    <property type="term" value="F:tRNA binding"/>
    <property type="evidence" value="ECO:0007669"/>
    <property type="project" value="UniProtKB-KW"/>
</dbReference>
<dbReference type="GO" id="GO:0006435">
    <property type="term" value="P:threonyl-tRNA aminoacylation"/>
    <property type="evidence" value="ECO:0007669"/>
    <property type="project" value="UniProtKB-UniRule"/>
</dbReference>
<dbReference type="CDD" id="cd01667">
    <property type="entry name" value="TGS_ThrRS"/>
    <property type="match status" value="1"/>
</dbReference>
<dbReference type="CDD" id="cd00860">
    <property type="entry name" value="ThrRS_anticodon"/>
    <property type="match status" value="1"/>
</dbReference>
<dbReference type="CDD" id="cd00771">
    <property type="entry name" value="ThrRS_core"/>
    <property type="match status" value="1"/>
</dbReference>
<dbReference type="FunFam" id="3.10.20.30:FF:000005">
    <property type="entry name" value="Threonine--tRNA ligase"/>
    <property type="match status" value="1"/>
</dbReference>
<dbReference type="FunFam" id="3.30.54.20:FF:000002">
    <property type="entry name" value="Threonine--tRNA ligase"/>
    <property type="match status" value="1"/>
</dbReference>
<dbReference type="FunFam" id="3.30.930.10:FF:000002">
    <property type="entry name" value="Threonine--tRNA ligase"/>
    <property type="match status" value="1"/>
</dbReference>
<dbReference type="FunFam" id="3.40.50.800:FF:000001">
    <property type="entry name" value="Threonine--tRNA ligase"/>
    <property type="match status" value="1"/>
</dbReference>
<dbReference type="FunFam" id="3.30.980.10:FF:000005">
    <property type="entry name" value="Threonyl-tRNA synthetase, mitochondrial"/>
    <property type="match status" value="1"/>
</dbReference>
<dbReference type="Gene3D" id="3.10.20.30">
    <property type="match status" value="1"/>
</dbReference>
<dbReference type="Gene3D" id="3.30.54.20">
    <property type="match status" value="1"/>
</dbReference>
<dbReference type="Gene3D" id="3.40.50.800">
    <property type="entry name" value="Anticodon-binding domain"/>
    <property type="match status" value="1"/>
</dbReference>
<dbReference type="Gene3D" id="3.30.930.10">
    <property type="entry name" value="Bira Bifunctional Protein, Domain 2"/>
    <property type="match status" value="1"/>
</dbReference>
<dbReference type="Gene3D" id="3.30.980.10">
    <property type="entry name" value="Threonyl-trna Synthetase, Chain A, domain 2"/>
    <property type="match status" value="1"/>
</dbReference>
<dbReference type="HAMAP" id="MF_00184">
    <property type="entry name" value="Thr_tRNA_synth"/>
    <property type="match status" value="1"/>
</dbReference>
<dbReference type="InterPro" id="IPR002314">
    <property type="entry name" value="aa-tRNA-synt_IIb"/>
</dbReference>
<dbReference type="InterPro" id="IPR006195">
    <property type="entry name" value="aa-tRNA-synth_II"/>
</dbReference>
<dbReference type="InterPro" id="IPR045864">
    <property type="entry name" value="aa-tRNA-synth_II/BPL/LPL"/>
</dbReference>
<dbReference type="InterPro" id="IPR004154">
    <property type="entry name" value="Anticodon-bd"/>
</dbReference>
<dbReference type="InterPro" id="IPR036621">
    <property type="entry name" value="Anticodon-bd_dom_sf"/>
</dbReference>
<dbReference type="InterPro" id="IPR012675">
    <property type="entry name" value="Beta-grasp_dom_sf"/>
</dbReference>
<dbReference type="InterPro" id="IPR004095">
    <property type="entry name" value="TGS"/>
</dbReference>
<dbReference type="InterPro" id="IPR012676">
    <property type="entry name" value="TGS-like"/>
</dbReference>
<dbReference type="InterPro" id="IPR002320">
    <property type="entry name" value="Thr-tRNA-ligase_IIa"/>
</dbReference>
<dbReference type="InterPro" id="IPR018163">
    <property type="entry name" value="Thr/Ala-tRNA-synth_IIc_edit"/>
</dbReference>
<dbReference type="InterPro" id="IPR047246">
    <property type="entry name" value="ThrRS_anticodon"/>
</dbReference>
<dbReference type="InterPro" id="IPR033728">
    <property type="entry name" value="ThrRS_core"/>
</dbReference>
<dbReference type="InterPro" id="IPR012947">
    <property type="entry name" value="tRNA_SAD"/>
</dbReference>
<dbReference type="NCBIfam" id="TIGR00418">
    <property type="entry name" value="thrS"/>
    <property type="match status" value="1"/>
</dbReference>
<dbReference type="PANTHER" id="PTHR11451:SF56">
    <property type="entry name" value="THREONINE--TRNA LIGASE 1"/>
    <property type="match status" value="1"/>
</dbReference>
<dbReference type="PANTHER" id="PTHR11451">
    <property type="entry name" value="THREONINE-TRNA LIGASE"/>
    <property type="match status" value="1"/>
</dbReference>
<dbReference type="Pfam" id="PF03129">
    <property type="entry name" value="HGTP_anticodon"/>
    <property type="match status" value="1"/>
</dbReference>
<dbReference type="Pfam" id="PF02824">
    <property type="entry name" value="TGS"/>
    <property type="match status" value="1"/>
</dbReference>
<dbReference type="Pfam" id="PF00587">
    <property type="entry name" value="tRNA-synt_2b"/>
    <property type="match status" value="1"/>
</dbReference>
<dbReference type="Pfam" id="PF07973">
    <property type="entry name" value="tRNA_SAD"/>
    <property type="match status" value="1"/>
</dbReference>
<dbReference type="PRINTS" id="PR01047">
    <property type="entry name" value="TRNASYNTHTHR"/>
</dbReference>
<dbReference type="SMART" id="SM00863">
    <property type="entry name" value="tRNA_SAD"/>
    <property type="match status" value="1"/>
</dbReference>
<dbReference type="SUPFAM" id="SSF52954">
    <property type="entry name" value="Class II aaRS ABD-related"/>
    <property type="match status" value="1"/>
</dbReference>
<dbReference type="SUPFAM" id="SSF55681">
    <property type="entry name" value="Class II aaRS and biotin synthetases"/>
    <property type="match status" value="1"/>
</dbReference>
<dbReference type="SUPFAM" id="SSF81271">
    <property type="entry name" value="TGS-like"/>
    <property type="match status" value="1"/>
</dbReference>
<dbReference type="SUPFAM" id="SSF55186">
    <property type="entry name" value="ThrRS/AlaRS common domain"/>
    <property type="match status" value="1"/>
</dbReference>
<dbReference type="PROSITE" id="PS50862">
    <property type="entry name" value="AA_TRNA_LIGASE_II"/>
    <property type="match status" value="1"/>
</dbReference>
<dbReference type="PROSITE" id="PS51880">
    <property type="entry name" value="TGS"/>
    <property type="match status" value="1"/>
</dbReference>
<reference key="1">
    <citation type="journal article" date="2005" name="J. Bacteriol.">
        <title>Insights on evolution of virulence and resistance from the complete genome analysis of an early methicillin-resistant Staphylococcus aureus strain and a biofilm-producing methicillin-resistant Staphylococcus epidermidis strain.</title>
        <authorList>
            <person name="Gill S.R."/>
            <person name="Fouts D.E."/>
            <person name="Archer G.L."/>
            <person name="Mongodin E.F."/>
            <person name="DeBoy R.T."/>
            <person name="Ravel J."/>
            <person name="Paulsen I.T."/>
            <person name="Kolonay J.F."/>
            <person name="Brinkac L.M."/>
            <person name="Beanan M.J."/>
            <person name="Dodson R.J."/>
            <person name="Daugherty S.C."/>
            <person name="Madupu R."/>
            <person name="Angiuoli S.V."/>
            <person name="Durkin A.S."/>
            <person name="Haft D.H."/>
            <person name="Vamathevan J.J."/>
            <person name="Khouri H."/>
            <person name="Utterback T.R."/>
            <person name="Lee C."/>
            <person name="Dimitrov G."/>
            <person name="Jiang L."/>
            <person name="Qin H."/>
            <person name="Weidman J."/>
            <person name="Tran K."/>
            <person name="Kang K.H."/>
            <person name="Hance I.R."/>
            <person name="Nelson K.E."/>
            <person name="Fraser C.M."/>
        </authorList>
    </citation>
    <scope>NUCLEOTIDE SEQUENCE [LARGE SCALE GENOMIC DNA]</scope>
    <source>
        <strain>COL</strain>
    </source>
</reference>
<name>SYT_STAAC</name>
<protein>
    <recommendedName>
        <fullName evidence="1">Threonine--tRNA ligase</fullName>
        <ecNumber evidence="1">6.1.1.3</ecNumber>
    </recommendedName>
    <alternativeName>
        <fullName evidence="1">Threonyl-tRNA synthetase</fullName>
        <shortName evidence="1">ThrRS</shortName>
    </alternativeName>
</protein>
<organism>
    <name type="scientific">Staphylococcus aureus (strain COL)</name>
    <dbReference type="NCBI Taxonomy" id="93062"/>
    <lineage>
        <taxon>Bacteria</taxon>
        <taxon>Bacillati</taxon>
        <taxon>Bacillota</taxon>
        <taxon>Bacilli</taxon>
        <taxon>Bacillales</taxon>
        <taxon>Staphylococcaceae</taxon>
        <taxon>Staphylococcus</taxon>
    </lineage>
</organism>
<proteinExistence type="inferred from homology"/>
<accession>Q5HF90</accession>
<feature type="chain" id="PRO_0000101047" description="Threonine--tRNA ligase">
    <location>
        <begin position="1"/>
        <end position="645"/>
    </location>
</feature>
<feature type="domain" description="TGS" evidence="2">
    <location>
        <begin position="1"/>
        <end position="63"/>
    </location>
</feature>
<feature type="region of interest" description="Catalytic" evidence="1">
    <location>
        <begin position="242"/>
        <end position="540"/>
    </location>
</feature>
<feature type="binding site" evidence="1">
    <location>
        <position position="336"/>
    </location>
    <ligand>
        <name>Zn(2+)</name>
        <dbReference type="ChEBI" id="CHEBI:29105"/>
    </ligand>
</feature>
<feature type="binding site" evidence="1">
    <location>
        <position position="387"/>
    </location>
    <ligand>
        <name>Zn(2+)</name>
        <dbReference type="ChEBI" id="CHEBI:29105"/>
    </ligand>
</feature>
<feature type="binding site" evidence="1">
    <location>
        <position position="517"/>
    </location>
    <ligand>
        <name>Zn(2+)</name>
        <dbReference type="ChEBI" id="CHEBI:29105"/>
    </ligand>
</feature>
<evidence type="ECO:0000255" key="1">
    <source>
        <dbReference type="HAMAP-Rule" id="MF_00184"/>
    </source>
</evidence>
<evidence type="ECO:0000255" key="2">
    <source>
        <dbReference type="PROSITE-ProRule" id="PRU01228"/>
    </source>
</evidence>
<keyword id="KW-0030">Aminoacyl-tRNA synthetase</keyword>
<keyword id="KW-0067">ATP-binding</keyword>
<keyword id="KW-0963">Cytoplasm</keyword>
<keyword id="KW-0436">Ligase</keyword>
<keyword id="KW-0479">Metal-binding</keyword>
<keyword id="KW-0547">Nucleotide-binding</keyword>
<keyword id="KW-0648">Protein biosynthesis</keyword>
<keyword id="KW-0694">RNA-binding</keyword>
<keyword id="KW-0820">tRNA-binding</keyword>
<keyword id="KW-0862">Zinc</keyword>
<sequence>MEQINIQFPDGNKKAFDKGTTTEDIAQSISPGLRKKAVAGKFNGQLVDLTKPLETDGSIEIVTPGSEEALEVLRHSTAHLMAHAIKRLYGNVKFGVGPVIEGGFYYDFDIDQNISSDDFEQIEKTMKQIVNENMKIERKVVSRDEAKELFSNDEYKLELIDAIPEDENVTLYSQGDFTDLCRGVHVPSTAKIKEFKLLSTAGAYWRGDSNNKMLQRIYGTAFFDKKELKAHLQMLEERKERDHRKIGKELELFTNSQLVGAGLPLWLPNGATIRREIERYIVDKEVSMGYDHVYTPVLANVDLYKTSGHWDHYQEDMFPPMQLDETESMVLRPMNCPHHMMIYANKPHSYRELPIRIAELGTMHRYEASGAVSGLQRVRGMTLNDSHIFVRPDQIKEEFKRVVNMIIDVYKDFGFEDYSFRLSYRDPEDKEKYFDDDDMWNKAENMLKEAADELGLSYEEAIGEAAFYGPKLDVQVKTAMGKEETLSTAQLDFLLPERFDLTYIGQDGEHHRPVVIHRGVVSTMERFVAFLTEETKGAFPTWLAPKQVQIIPVNVDLHYDYARQLQDELKSQGVRVSIDDRNEKMGYKIREAQMQKIPYQIVVGDKEVENNQVNVRQYGSQDQETVEKDEFIWNLVDEIRLKKHR</sequence>